<keyword id="KW-0002">3D-structure</keyword>
<keyword id="KW-0007">Acetylation</keyword>
<keyword id="KW-0963">Cytoplasm</keyword>
<keyword id="KW-0378">Hydrolase</keyword>
<keyword id="KW-0413">Isomerase</keyword>
<keyword id="KW-0456">Lyase</keyword>
<keyword id="KW-0460">Magnesium</keyword>
<keyword id="KW-0464">Manganese</keyword>
<keyword id="KW-0479">Metal-binding</keyword>
<keyword id="KW-0496">Mitochondrion</keyword>
<keyword id="KW-0597">Phosphoprotein</keyword>
<keyword id="KW-1185">Reference proteome</keyword>
<keyword id="KW-0809">Transit peptide</keyword>
<accession>Q8R0F8</accession>
<accession>Q3U020</accession>
<accession>Q3UQY4</accession>
<accession>Q8BLJ7</accession>
<accession>Q9JJB2</accession>
<reference key="1">
    <citation type="submission" date="2000-04" db="EMBL/GenBank/DDBJ databases">
        <title>Isolation of full-length cDNA clones from mouse brain cDNA library made by oligo-capping method.</title>
        <authorList>
            <person name="Osada N."/>
            <person name="Kusuda J."/>
            <person name="Tanuma R."/>
            <person name="Ito A."/>
            <person name="Hirata M."/>
            <person name="Sugano S."/>
            <person name="Hashimoto K."/>
        </authorList>
    </citation>
    <scope>NUCLEOTIDE SEQUENCE [LARGE SCALE MRNA]</scope>
    <source>
        <strain>C57BL/6J</strain>
        <tissue>Brain</tissue>
    </source>
</reference>
<reference key="2">
    <citation type="journal article" date="2005" name="Science">
        <title>The transcriptional landscape of the mammalian genome.</title>
        <authorList>
            <person name="Carninci P."/>
            <person name="Kasukawa T."/>
            <person name="Katayama S."/>
            <person name="Gough J."/>
            <person name="Frith M.C."/>
            <person name="Maeda N."/>
            <person name="Oyama R."/>
            <person name="Ravasi T."/>
            <person name="Lenhard B."/>
            <person name="Wells C."/>
            <person name="Kodzius R."/>
            <person name="Shimokawa K."/>
            <person name="Bajic V.B."/>
            <person name="Brenner S.E."/>
            <person name="Batalov S."/>
            <person name="Forrest A.R."/>
            <person name="Zavolan M."/>
            <person name="Davis M.J."/>
            <person name="Wilming L.G."/>
            <person name="Aidinis V."/>
            <person name="Allen J.E."/>
            <person name="Ambesi-Impiombato A."/>
            <person name="Apweiler R."/>
            <person name="Aturaliya R.N."/>
            <person name="Bailey T.L."/>
            <person name="Bansal M."/>
            <person name="Baxter L."/>
            <person name="Beisel K.W."/>
            <person name="Bersano T."/>
            <person name="Bono H."/>
            <person name="Chalk A.M."/>
            <person name="Chiu K.P."/>
            <person name="Choudhary V."/>
            <person name="Christoffels A."/>
            <person name="Clutterbuck D.R."/>
            <person name="Crowe M.L."/>
            <person name="Dalla E."/>
            <person name="Dalrymple B.P."/>
            <person name="de Bono B."/>
            <person name="Della Gatta G."/>
            <person name="di Bernardo D."/>
            <person name="Down T."/>
            <person name="Engstrom P."/>
            <person name="Fagiolini M."/>
            <person name="Faulkner G."/>
            <person name="Fletcher C.F."/>
            <person name="Fukushima T."/>
            <person name="Furuno M."/>
            <person name="Futaki S."/>
            <person name="Gariboldi M."/>
            <person name="Georgii-Hemming P."/>
            <person name="Gingeras T.R."/>
            <person name="Gojobori T."/>
            <person name="Green R.E."/>
            <person name="Gustincich S."/>
            <person name="Harbers M."/>
            <person name="Hayashi Y."/>
            <person name="Hensch T.K."/>
            <person name="Hirokawa N."/>
            <person name="Hill D."/>
            <person name="Huminiecki L."/>
            <person name="Iacono M."/>
            <person name="Ikeo K."/>
            <person name="Iwama A."/>
            <person name="Ishikawa T."/>
            <person name="Jakt M."/>
            <person name="Kanapin A."/>
            <person name="Katoh M."/>
            <person name="Kawasawa Y."/>
            <person name="Kelso J."/>
            <person name="Kitamura H."/>
            <person name="Kitano H."/>
            <person name="Kollias G."/>
            <person name="Krishnan S.P."/>
            <person name="Kruger A."/>
            <person name="Kummerfeld S.K."/>
            <person name="Kurochkin I.V."/>
            <person name="Lareau L.F."/>
            <person name="Lazarevic D."/>
            <person name="Lipovich L."/>
            <person name="Liu J."/>
            <person name="Liuni S."/>
            <person name="McWilliam S."/>
            <person name="Madan Babu M."/>
            <person name="Madera M."/>
            <person name="Marchionni L."/>
            <person name="Matsuda H."/>
            <person name="Matsuzawa S."/>
            <person name="Miki H."/>
            <person name="Mignone F."/>
            <person name="Miyake S."/>
            <person name="Morris K."/>
            <person name="Mottagui-Tabar S."/>
            <person name="Mulder N."/>
            <person name="Nakano N."/>
            <person name="Nakauchi H."/>
            <person name="Ng P."/>
            <person name="Nilsson R."/>
            <person name="Nishiguchi S."/>
            <person name="Nishikawa S."/>
            <person name="Nori F."/>
            <person name="Ohara O."/>
            <person name="Okazaki Y."/>
            <person name="Orlando V."/>
            <person name="Pang K.C."/>
            <person name="Pavan W.J."/>
            <person name="Pavesi G."/>
            <person name="Pesole G."/>
            <person name="Petrovsky N."/>
            <person name="Piazza S."/>
            <person name="Reed J."/>
            <person name="Reid J.F."/>
            <person name="Ring B.Z."/>
            <person name="Ringwald M."/>
            <person name="Rost B."/>
            <person name="Ruan Y."/>
            <person name="Salzberg S.L."/>
            <person name="Sandelin A."/>
            <person name="Schneider C."/>
            <person name="Schoenbach C."/>
            <person name="Sekiguchi K."/>
            <person name="Semple C.A."/>
            <person name="Seno S."/>
            <person name="Sessa L."/>
            <person name="Sheng Y."/>
            <person name="Shibata Y."/>
            <person name="Shimada H."/>
            <person name="Shimada K."/>
            <person name="Silva D."/>
            <person name="Sinclair B."/>
            <person name="Sperling S."/>
            <person name="Stupka E."/>
            <person name="Sugiura K."/>
            <person name="Sultana R."/>
            <person name="Takenaka Y."/>
            <person name="Taki K."/>
            <person name="Tammoja K."/>
            <person name="Tan S.L."/>
            <person name="Tang S."/>
            <person name="Taylor M.S."/>
            <person name="Tegner J."/>
            <person name="Teichmann S.A."/>
            <person name="Ueda H.R."/>
            <person name="van Nimwegen E."/>
            <person name="Verardo R."/>
            <person name="Wei C.L."/>
            <person name="Yagi K."/>
            <person name="Yamanishi H."/>
            <person name="Zabarovsky E."/>
            <person name="Zhu S."/>
            <person name="Zimmer A."/>
            <person name="Hide W."/>
            <person name="Bult C."/>
            <person name="Grimmond S.M."/>
            <person name="Teasdale R.D."/>
            <person name="Liu E.T."/>
            <person name="Brusic V."/>
            <person name="Quackenbush J."/>
            <person name="Wahlestedt C."/>
            <person name="Mattick J.S."/>
            <person name="Hume D.A."/>
            <person name="Kai C."/>
            <person name="Sasaki D."/>
            <person name="Tomaru Y."/>
            <person name="Fukuda S."/>
            <person name="Kanamori-Katayama M."/>
            <person name="Suzuki M."/>
            <person name="Aoki J."/>
            <person name="Arakawa T."/>
            <person name="Iida J."/>
            <person name="Imamura K."/>
            <person name="Itoh M."/>
            <person name="Kato T."/>
            <person name="Kawaji H."/>
            <person name="Kawagashira N."/>
            <person name="Kawashima T."/>
            <person name="Kojima M."/>
            <person name="Kondo S."/>
            <person name="Konno H."/>
            <person name="Nakano K."/>
            <person name="Ninomiya N."/>
            <person name="Nishio T."/>
            <person name="Okada M."/>
            <person name="Plessy C."/>
            <person name="Shibata K."/>
            <person name="Shiraki T."/>
            <person name="Suzuki S."/>
            <person name="Tagami M."/>
            <person name="Waki K."/>
            <person name="Watahiki A."/>
            <person name="Okamura-Oho Y."/>
            <person name="Suzuki H."/>
            <person name="Kawai J."/>
            <person name="Hayashizaki Y."/>
        </authorList>
    </citation>
    <scope>NUCLEOTIDE SEQUENCE [LARGE SCALE MRNA]</scope>
    <source>
        <strain>C57BL/6J</strain>
        <strain>NOD</strain>
        <tissue>Embryo</tissue>
        <tissue>Spinal ganglion</tissue>
        <tissue>Spleen</tissue>
    </source>
</reference>
<reference key="3">
    <citation type="journal article" date="2009" name="PLoS Biol.">
        <title>Lineage-specific biology revealed by a finished genome assembly of the mouse.</title>
        <authorList>
            <person name="Church D.M."/>
            <person name="Goodstadt L."/>
            <person name="Hillier L.W."/>
            <person name="Zody M.C."/>
            <person name="Goldstein S."/>
            <person name="She X."/>
            <person name="Bult C.J."/>
            <person name="Agarwala R."/>
            <person name="Cherry J.L."/>
            <person name="DiCuccio M."/>
            <person name="Hlavina W."/>
            <person name="Kapustin Y."/>
            <person name="Meric P."/>
            <person name="Maglott D."/>
            <person name="Birtle Z."/>
            <person name="Marques A.C."/>
            <person name="Graves T."/>
            <person name="Zhou S."/>
            <person name="Teague B."/>
            <person name="Potamousis K."/>
            <person name="Churas C."/>
            <person name="Place M."/>
            <person name="Herschleb J."/>
            <person name="Runnheim R."/>
            <person name="Forrest D."/>
            <person name="Amos-Landgraf J."/>
            <person name="Schwartz D.C."/>
            <person name="Cheng Z."/>
            <person name="Lindblad-Toh K."/>
            <person name="Eichler E.E."/>
            <person name="Ponting C.P."/>
        </authorList>
    </citation>
    <scope>NUCLEOTIDE SEQUENCE [LARGE SCALE GENOMIC DNA]</scope>
    <source>
        <strain>C57BL/6J</strain>
    </source>
</reference>
<reference key="4">
    <citation type="journal article" date="2004" name="Genome Res.">
        <title>The status, quality, and expansion of the NIH full-length cDNA project: the Mammalian Gene Collection (MGC).</title>
        <authorList>
            <consortium name="The MGC Project Team"/>
        </authorList>
    </citation>
    <scope>NUCLEOTIDE SEQUENCE [LARGE SCALE MRNA]</scope>
    <source>
        <strain>FVB/N</strain>
        <tissue>Kidney</tissue>
    </source>
</reference>
<reference key="5">
    <citation type="journal article" date="2010" name="Cell">
        <title>A tissue-specific atlas of mouse protein phosphorylation and expression.</title>
        <authorList>
            <person name="Huttlin E.L."/>
            <person name="Jedrychowski M.P."/>
            <person name="Elias J.E."/>
            <person name="Goswami T."/>
            <person name="Rad R."/>
            <person name="Beausoleil S.A."/>
            <person name="Villen J."/>
            <person name="Haas W."/>
            <person name="Sowa M.E."/>
            <person name="Gygi S.P."/>
        </authorList>
    </citation>
    <scope>IDENTIFICATION BY MASS SPECTROMETRY [LARGE SCALE ANALYSIS]</scope>
    <source>
        <tissue>Brain</tissue>
        <tissue>Brown adipose tissue</tissue>
        <tissue>Heart</tissue>
        <tissue>Kidney</tissue>
        <tissue>Liver</tissue>
        <tissue>Lung</tissue>
        <tissue>Pancreas</tissue>
        <tissue>Spleen</tissue>
        <tissue>Testis</tissue>
    </source>
</reference>
<reference key="6">
    <citation type="journal article" date="2011" name="J. Biol. Chem.">
        <title>Identification of human fumarylacetoacetate hydrolase domain containing protein 1 (FAHD1) as a novel mitochondrial acylpyruvase.</title>
        <authorList>
            <person name="Pircher H."/>
            <person name="Straganz G.D."/>
            <person name="Ehehalt D."/>
            <person name="Morrow G."/>
            <person name="Tanguay R.M."/>
            <person name="Jansen-Durr P."/>
        </authorList>
    </citation>
    <scope>TISSUE SPECIFICITY</scope>
</reference>
<reference key="7">
    <citation type="journal article" date="2013" name="Mol. Cell">
        <title>SIRT5-mediated lysine desuccinylation impacts diverse metabolic pathways.</title>
        <authorList>
            <person name="Park J."/>
            <person name="Chen Y."/>
            <person name="Tishkoff D.X."/>
            <person name="Peng C."/>
            <person name="Tan M."/>
            <person name="Dai L."/>
            <person name="Xie Z."/>
            <person name="Zhang Y."/>
            <person name="Zwaans B.M."/>
            <person name="Skinner M.E."/>
            <person name="Lombard D.B."/>
            <person name="Zhao Y."/>
        </authorList>
    </citation>
    <scope>SUCCINYLATION [LARGE SCALE ANALYSIS] AT LYS-112</scope>
    <scope>IDENTIFICATION BY MASS SPECTROMETRY [LARGE SCALE ANALYSIS]</scope>
    <source>
        <tissue>Liver</tissue>
    </source>
</reference>
<reference key="8">
    <citation type="journal article" date="2013" name="Proc. Natl. Acad. Sci. U.S.A.">
        <title>Label-free quantitative proteomics of the lysine acetylome in mitochondria identifies substrates of SIRT3 in metabolic pathways.</title>
        <authorList>
            <person name="Rardin M.J."/>
            <person name="Newman J.C."/>
            <person name="Held J.M."/>
            <person name="Cusack M.P."/>
            <person name="Sorensen D.J."/>
            <person name="Li B."/>
            <person name="Schilling B."/>
            <person name="Mooney S.D."/>
            <person name="Kahn C.R."/>
            <person name="Verdin E."/>
            <person name="Gibson B.W."/>
        </authorList>
    </citation>
    <scope>ACETYLATION [LARGE SCALE ANALYSIS] AT LYS-110</scope>
    <scope>IDENTIFICATION BY MASS SPECTROMETRY [LARGE SCALE ANALYSIS]</scope>
    <source>
        <tissue>Liver</tissue>
    </source>
</reference>
<reference key="9">
    <citation type="journal article" date="2015" name="J. Biol. Chem.">
        <title>Identification of FAH domain containing protein 1 (FAHD1) as oxaloacetate decarboxylase.</title>
        <authorList>
            <person name="Pircher H."/>
            <person name="von Grafenstein S."/>
            <person name="Diener T."/>
            <person name="Metzger C."/>
            <person name="Albertini E."/>
            <person name="Taferner A."/>
            <person name="Unterluggauer H."/>
            <person name="Kramer C."/>
            <person name="Liedl K.R."/>
            <person name="Jansen-Durr P."/>
        </authorList>
    </citation>
    <scope>FUNCTION</scope>
    <scope>DISRUPTION PHENOTYPE</scope>
</reference>
<reference evidence="13 14" key="10">
    <citation type="journal article" date="2020" name="Biosci. Rep.">
        <title>Structural and functional comparison of fumarylacetoacetate domain containing protein 1 in human and mouse.</title>
        <authorList>
            <person name="Weiss A.K.H."/>
            <person name="Naschberger A."/>
            <person name="Cappuccio E."/>
            <person name="Metzger C."/>
            <person name="Mottes L."/>
            <person name="Holzknecht M."/>
            <person name="von Velsen J."/>
            <person name="Bowler M.W."/>
            <person name="Rupp B."/>
            <person name="Jansen-Durr P."/>
        </authorList>
    </citation>
    <scope>X-RAY CRYSTALLOGRAPHY (2.22 ANGSTROMS) IN COMPLEX WITH MG(2+) AND OXALATE INHIBITOR</scope>
    <scope>FUNCTION</scope>
    <scope>CATALYTIC ACTIVITY</scope>
    <scope>BIOPHYSICOCHEMICAL PROPERTIES</scope>
    <scope>COFACTOR</scope>
</reference>
<comment type="function">
    <text evidence="2 6 10">Tautomerase that converts enol-oxaloacetate, a strong inhibitor of succinate dehydrogenase, to the physiological keto form of oxaloacetate (By similarity). It is thereby required to maximize aerobic respiration efficiency by preventing succinate dehydrogenase inhibition (By similarity). Also acts as a weak oxaloacetate decarboxylase (ODx), catalyzing the decarboxylation of oxaloacetate (OAA) to pyruvate and CO(2), and as such is likely a regulatory enzyme in the TCA cycle (Probable) (PubMed:25575590, PubMed:32068790). Also displays acylpyruvase activity, being able to hydrolyze acetylpyruvate and fumarylpyruvate in vitro (PubMed:32068790).</text>
</comment>
<comment type="catalytic activity">
    <reaction evidence="2">
        <text>oxaloacetate = enol-oxaloacetate</text>
        <dbReference type="Rhea" id="RHEA:16021"/>
        <dbReference type="ChEBI" id="CHEBI:16452"/>
        <dbReference type="ChEBI" id="CHEBI:17479"/>
        <dbReference type="EC" id="5.3.2.2"/>
    </reaction>
    <physiologicalReaction direction="right-to-left" evidence="2">
        <dbReference type="Rhea" id="RHEA:16023"/>
    </physiologicalReaction>
</comment>
<comment type="catalytic activity">
    <reaction evidence="6">
        <text>oxaloacetate + H(+) = pyruvate + CO2</text>
        <dbReference type="Rhea" id="RHEA:15641"/>
        <dbReference type="ChEBI" id="CHEBI:15361"/>
        <dbReference type="ChEBI" id="CHEBI:15378"/>
        <dbReference type="ChEBI" id="CHEBI:16452"/>
        <dbReference type="ChEBI" id="CHEBI:16526"/>
        <dbReference type="EC" id="4.1.1.112"/>
    </reaction>
</comment>
<comment type="catalytic activity">
    <reaction evidence="6">
        <text>a 3-acylpyruvate + H2O = a carboxylate + pyruvate + H(+)</text>
        <dbReference type="Rhea" id="RHEA:19009"/>
        <dbReference type="ChEBI" id="CHEBI:15361"/>
        <dbReference type="ChEBI" id="CHEBI:15377"/>
        <dbReference type="ChEBI" id="CHEBI:15378"/>
        <dbReference type="ChEBI" id="CHEBI:29067"/>
        <dbReference type="ChEBI" id="CHEBI:57278"/>
        <dbReference type="EC" id="3.7.1.5"/>
    </reaction>
</comment>
<comment type="catalytic activity">
    <reaction evidence="6">
        <text>acetylpyruvate + H2O = acetate + pyruvate + H(+)</text>
        <dbReference type="Rhea" id="RHEA:16097"/>
        <dbReference type="ChEBI" id="CHEBI:15360"/>
        <dbReference type="ChEBI" id="CHEBI:15361"/>
        <dbReference type="ChEBI" id="CHEBI:15377"/>
        <dbReference type="ChEBI" id="CHEBI:15378"/>
        <dbReference type="ChEBI" id="CHEBI:30089"/>
    </reaction>
</comment>
<comment type="catalytic activity">
    <reaction evidence="2">
        <text>3-fumarylpyruvate + H2O = fumarate + pyruvate + H(+)</text>
        <dbReference type="Rhea" id="RHEA:26168"/>
        <dbReference type="ChEBI" id="CHEBI:15361"/>
        <dbReference type="ChEBI" id="CHEBI:15377"/>
        <dbReference type="ChEBI" id="CHEBI:15378"/>
        <dbReference type="ChEBI" id="CHEBI:16854"/>
        <dbReference type="ChEBI" id="CHEBI:29806"/>
    </reaction>
</comment>
<comment type="cofactor">
    <cofactor evidence="11">
        <name>Mg(2+)</name>
        <dbReference type="ChEBI" id="CHEBI:18420"/>
    </cofactor>
    <cofactor evidence="2">
        <name>Mn(2+)</name>
        <dbReference type="ChEBI" id="CHEBI:29035"/>
    </cofactor>
    <text evidence="2">Requires a divalent metal cation for activity.</text>
</comment>
<comment type="activity regulation">
    <text evidence="5">Oxaloacetate decarboxylation is potently and competitively inhibited by oxalate.</text>
</comment>
<comment type="biophysicochemical properties">
    <kinetics>
        <KM evidence="6">43 uM for oxaloacetate</KM>
        <KM evidence="6">7 uM for acetylpyruvate</KM>
        <Vmax evidence="6">0.21 umol/min/mg enzyme for the decarboxylation of oxaloacetate</Vmax>
        <Vmax evidence="6">0.14 umol/min/mg enzyme for the hydrolysis of acetylpyruvate</Vmax>
        <text evidence="6">kcat is 210 nmol/min/mg for the decarboxylation of oxaloacetate. kcat is 140 nmol/min/mg for the hydrolysis of acetylpyruvate.</text>
    </kinetics>
</comment>
<comment type="subunit">
    <text evidence="2">Homodimer.</text>
</comment>
<comment type="subcellular location">
    <subcellularLocation>
        <location evidence="2">Mitochondrion</location>
    </subcellularLocation>
    <subcellularLocation>
        <location evidence="2">Cytoplasm</location>
        <location evidence="2">Cytosol</location>
    </subcellularLocation>
</comment>
<comment type="tissue specificity">
    <text evidence="4">Ubiquitous with higher expression in the liver and the kidney (at protein level).</text>
</comment>
<comment type="disruption phenotype">
    <text evidence="5">Elevated oxaloacetate levels. No other visible phenotype.</text>
</comment>
<comment type="similarity">
    <text evidence="9">Belongs to the FAH family.</text>
</comment>
<comment type="sequence caution" evidence="9">
    <conflict type="erroneous initiation">
        <sequence resource="EMBL-CDS" id="AAH26949"/>
    </conflict>
    <text>Extended N-terminus.</text>
</comment>
<comment type="sequence caution" evidence="9">
    <conflict type="erroneous initiation">
        <sequence resource="EMBL-CDS" id="BAA95083"/>
    </conflict>
    <text>Extended N-terminus.</text>
</comment>
<comment type="sequence caution" evidence="9">
    <conflict type="erroneous initiation">
        <sequence resource="EMBL-CDS" id="BAE24904"/>
    </conflict>
    <text>Extended N-terminus.</text>
</comment>
<comment type="sequence caution" evidence="9">
    <conflict type="erroneous initiation">
        <sequence resource="EMBL-CDS" id="BAE34035"/>
    </conflict>
    <text>Extended N-terminus.</text>
</comment>
<protein>
    <recommendedName>
        <fullName evidence="9">Oxaloacetate tautomerase FAHD1, mitochondrial</fullName>
        <ecNumber evidence="2">5.3.2.2</ecNumber>
    </recommendedName>
    <alternativeName>
        <fullName evidence="9">Acylpyruvase FAHD1</fullName>
        <ecNumber evidence="6">3.7.1.5</ecNumber>
    </alternativeName>
    <alternativeName>
        <fullName evidence="8">Acylpyruvate hydrolase</fullName>
        <shortName evidence="8">ApH</shortName>
    </alternativeName>
    <alternativeName>
        <fullName>Fumarylacetoacetate hydrolase domain-containing protein 1</fullName>
    </alternativeName>
    <alternativeName>
        <fullName evidence="7 8">Oxaloacetate decarboxylase</fullName>
        <shortName evidence="7 8">OAA decarboxylase</shortName>
        <shortName evidence="7 8">ODx</shortName>
        <ecNumber evidence="6">4.1.1.112</ecNumber>
    </alternativeName>
</protein>
<proteinExistence type="evidence at protein level"/>
<organism>
    <name type="scientific">Mus musculus</name>
    <name type="common">Mouse</name>
    <dbReference type="NCBI Taxonomy" id="10090"/>
    <lineage>
        <taxon>Eukaryota</taxon>
        <taxon>Metazoa</taxon>
        <taxon>Chordata</taxon>
        <taxon>Craniata</taxon>
        <taxon>Vertebrata</taxon>
        <taxon>Euteleostomi</taxon>
        <taxon>Mammalia</taxon>
        <taxon>Eutheria</taxon>
        <taxon>Euarchontoglires</taxon>
        <taxon>Glires</taxon>
        <taxon>Rodentia</taxon>
        <taxon>Myomorpha</taxon>
        <taxon>Muroidea</taxon>
        <taxon>Muridae</taxon>
        <taxon>Murinae</taxon>
        <taxon>Mus</taxon>
        <taxon>Mus</taxon>
    </lineage>
</organism>
<feature type="transit peptide" description="Mitochondrion" evidence="3">
    <location>
        <begin position="1"/>
        <end position="24"/>
    </location>
</feature>
<feature type="chain" id="PRO_0000156830" description="Oxaloacetate tautomerase FAHD1, mitochondrial">
    <location>
        <begin position="25"/>
        <end position="221"/>
    </location>
</feature>
<feature type="binding site" evidence="6 13">
    <location>
        <position position="22"/>
    </location>
    <ligand>
        <name>oxalate</name>
        <dbReference type="ChEBI" id="CHEBI:30623"/>
        <note>inhibitor</note>
    </ligand>
</feature>
<feature type="binding site" evidence="6 13 14">
    <location>
        <position position="68"/>
    </location>
    <ligand>
        <name>Mg(2+)</name>
        <dbReference type="ChEBI" id="CHEBI:18420"/>
    </ligand>
</feature>
<feature type="binding site" evidence="6 13 14">
    <location>
        <position position="70"/>
    </location>
    <ligand>
        <name>Mg(2+)</name>
        <dbReference type="ChEBI" id="CHEBI:18420"/>
    </ligand>
</feature>
<feature type="binding site" evidence="6 13 14">
    <location>
        <position position="99"/>
    </location>
    <ligand>
        <name>Mg(2+)</name>
        <dbReference type="ChEBI" id="CHEBI:18420"/>
    </ligand>
</feature>
<feature type="binding site" evidence="6 13">
    <location>
        <position position="120"/>
    </location>
    <ligand>
        <name>oxalate</name>
        <dbReference type="ChEBI" id="CHEBI:30623"/>
        <note>inhibitor</note>
    </ligand>
</feature>
<feature type="modified residue" description="Phosphoserine" evidence="1">
    <location>
        <position position="37"/>
    </location>
</feature>
<feature type="modified residue" description="N6-acetyllysine" evidence="15">
    <location>
        <position position="110"/>
    </location>
</feature>
<feature type="modified residue" description="N6-succinyllysine" evidence="16">
    <location>
        <position position="112"/>
    </location>
</feature>
<feature type="sequence conflict" description="In Ref. 2; BAE34035 and 4; AAH26949." evidence="9" ref="2 4">
    <original>I</original>
    <variation>V</variation>
    <location>
        <position position="196"/>
    </location>
</feature>
<feature type="helix" evidence="17">
    <location>
        <begin position="7"/>
        <end position="9"/>
    </location>
</feature>
<feature type="helix" evidence="17">
    <location>
        <begin position="10"/>
        <end position="13"/>
    </location>
</feature>
<feature type="strand" evidence="17">
    <location>
        <begin position="17"/>
        <end position="21"/>
    </location>
</feature>
<feature type="strand" evidence="17">
    <location>
        <begin position="24"/>
        <end position="26"/>
    </location>
</feature>
<feature type="strand" evidence="17">
    <location>
        <begin position="41"/>
        <end position="44"/>
    </location>
</feature>
<feature type="helix" evidence="17">
    <location>
        <begin position="46"/>
        <end position="48"/>
    </location>
</feature>
<feature type="strand" evidence="17">
    <location>
        <begin position="49"/>
        <end position="51"/>
    </location>
</feature>
<feature type="strand" evidence="17">
    <location>
        <begin position="56"/>
        <end position="58"/>
    </location>
</feature>
<feature type="strand" evidence="17">
    <location>
        <begin position="63"/>
        <end position="67"/>
    </location>
</feature>
<feature type="strand" evidence="17">
    <location>
        <begin position="69"/>
        <end position="75"/>
    </location>
</feature>
<feature type="strand" evidence="17">
    <location>
        <begin position="79"/>
        <end position="81"/>
    </location>
</feature>
<feature type="turn" evidence="17">
    <location>
        <begin position="84"/>
        <end position="86"/>
    </location>
</feature>
<feature type="helix" evidence="17">
    <location>
        <begin position="87"/>
        <end position="90"/>
    </location>
</feature>
<feature type="strand" evidence="17">
    <location>
        <begin position="91"/>
        <end position="98"/>
    </location>
</feature>
<feature type="helix" evidence="17">
    <location>
        <begin position="103"/>
        <end position="112"/>
    </location>
</feature>
<feature type="helix" evidence="17">
    <location>
        <begin position="117"/>
        <end position="120"/>
    </location>
</feature>
<feature type="strand" evidence="17">
    <location>
        <begin position="126"/>
        <end position="128"/>
    </location>
</feature>
<feature type="helix" evidence="17">
    <location>
        <begin position="134"/>
        <end position="136"/>
    </location>
</feature>
<feature type="strand" evidence="17">
    <location>
        <begin position="144"/>
        <end position="149"/>
    </location>
</feature>
<feature type="strand" evidence="17">
    <location>
        <begin position="152"/>
        <end position="158"/>
    </location>
</feature>
<feature type="helix" evidence="17">
    <location>
        <begin position="159"/>
        <end position="161"/>
    </location>
</feature>
<feature type="strand" evidence="17">
    <location>
        <begin position="162"/>
        <end position="164"/>
    </location>
</feature>
<feature type="helix" evidence="17">
    <location>
        <begin position="166"/>
        <end position="176"/>
    </location>
</feature>
<feature type="strand" evidence="17">
    <location>
        <begin position="184"/>
        <end position="186"/>
    </location>
</feature>
<feature type="strand" evidence="17">
    <location>
        <begin position="201"/>
        <end position="206"/>
    </location>
</feature>
<feature type="turn" evidence="17">
    <location>
        <begin position="207"/>
        <end position="209"/>
    </location>
</feature>
<feature type="strand" evidence="17">
    <location>
        <begin position="210"/>
        <end position="218"/>
    </location>
</feature>
<sequence>MASTKPLSRFWEWGKNIVCVGRNYADHVKEMRSTVLSEPVLFLKPSTAYAPEGSPVLMPAYCRNLHHEVELGVLLGKRGEAIPEAAAMDYVAGYALCLDMTARDVQEECKKKGLPWTLAKSFTSSCPVSAFVPKEKIPDPHALRLWLKVNGELRQEGKTSSMIFSIPYIISYVSKIITLEEGDLILTGTPKGVGPIKENDEIEAGIDGVVSMRFKVKRSEY</sequence>
<gene>
    <name evidence="12" type="primary">Fahd1</name>
    <name type="ORF">MNCb-4134</name>
</gene>
<dbReference type="EC" id="5.3.2.2" evidence="2"/>
<dbReference type="EC" id="3.7.1.5" evidence="6"/>
<dbReference type="EC" id="4.1.1.112" evidence="6"/>
<dbReference type="EMBL" id="AB041600">
    <property type="protein sequence ID" value="BAA95083.1"/>
    <property type="status" value="ALT_INIT"/>
    <property type="molecule type" value="mRNA"/>
</dbReference>
<dbReference type="EMBL" id="AK044920">
    <property type="protein sequence ID" value="BAC32142.1"/>
    <property type="molecule type" value="mRNA"/>
</dbReference>
<dbReference type="EMBL" id="AK141973">
    <property type="protein sequence ID" value="BAE24904.1"/>
    <property type="status" value="ALT_INIT"/>
    <property type="molecule type" value="mRNA"/>
</dbReference>
<dbReference type="EMBL" id="AK157292">
    <property type="protein sequence ID" value="BAE34035.1"/>
    <property type="status" value="ALT_INIT"/>
    <property type="molecule type" value="mRNA"/>
</dbReference>
<dbReference type="EMBL" id="AC166102">
    <property type="status" value="NOT_ANNOTATED_CDS"/>
    <property type="molecule type" value="Genomic_DNA"/>
</dbReference>
<dbReference type="EMBL" id="BC026949">
    <property type="protein sequence ID" value="AAH26949.1"/>
    <property type="status" value="ALT_INIT"/>
    <property type="molecule type" value="mRNA"/>
</dbReference>
<dbReference type="CCDS" id="CCDS37496.1"/>
<dbReference type="RefSeq" id="NP_075969.2">
    <property type="nucleotide sequence ID" value="NM_023480.4"/>
</dbReference>
<dbReference type="PDB" id="6SBI">
    <property type="method" value="X-ray"/>
    <property type="resolution" value="2.70 A"/>
    <property type="chains" value="A/B/C/D=1-221"/>
</dbReference>
<dbReference type="PDB" id="6SBJ">
    <property type="method" value="X-ray"/>
    <property type="resolution" value="2.22 A"/>
    <property type="chains" value="A/B/C/D=1-221"/>
</dbReference>
<dbReference type="PDBsum" id="6SBI"/>
<dbReference type="PDBsum" id="6SBJ"/>
<dbReference type="SMR" id="Q8R0F8"/>
<dbReference type="BioGRID" id="212967">
    <property type="interactions" value="1"/>
</dbReference>
<dbReference type="FunCoup" id="Q8R0F8">
    <property type="interactions" value="2616"/>
</dbReference>
<dbReference type="IntAct" id="Q8R0F8">
    <property type="interactions" value="1"/>
</dbReference>
<dbReference type="STRING" id="10090.ENSMUSP00000055827"/>
<dbReference type="GlyGen" id="Q8R0F8">
    <property type="glycosylation" value="1 site, 1 O-linked glycan (1 site)"/>
</dbReference>
<dbReference type="iPTMnet" id="Q8R0F8"/>
<dbReference type="PhosphoSitePlus" id="Q8R0F8"/>
<dbReference type="SwissPalm" id="Q8R0F8"/>
<dbReference type="jPOST" id="Q8R0F8"/>
<dbReference type="PaxDb" id="10090-ENSMUSP00000055827"/>
<dbReference type="PeptideAtlas" id="Q8R0F8"/>
<dbReference type="ProteomicsDB" id="271857"/>
<dbReference type="Pumba" id="Q8R0F8"/>
<dbReference type="Antibodypedia" id="56108">
    <property type="antibodies" value="69 antibodies from 13 providers"/>
</dbReference>
<dbReference type="DNASU" id="68636"/>
<dbReference type="Ensembl" id="ENSMUST00000049642.7">
    <property type="protein sequence ID" value="ENSMUSP00000055827.6"/>
    <property type="gene ID" value="ENSMUSG00000045316.6"/>
</dbReference>
<dbReference type="GeneID" id="68636"/>
<dbReference type="KEGG" id="mmu:68636"/>
<dbReference type="UCSC" id="uc008ayl.1">
    <property type="organism name" value="mouse"/>
</dbReference>
<dbReference type="AGR" id="MGI:1915886"/>
<dbReference type="CTD" id="81889"/>
<dbReference type="MGI" id="MGI:1915886">
    <property type="gene designation" value="Fahd1"/>
</dbReference>
<dbReference type="VEuPathDB" id="HostDB:ENSMUSG00000045316"/>
<dbReference type="eggNOG" id="KOG1535">
    <property type="taxonomic scope" value="Eukaryota"/>
</dbReference>
<dbReference type="GeneTree" id="ENSGT00940000160452"/>
<dbReference type="HOGENOM" id="CLU_028458_5_0_1"/>
<dbReference type="InParanoid" id="Q8R0F8"/>
<dbReference type="OrthoDB" id="411064at2759"/>
<dbReference type="PhylomeDB" id="Q8R0F8"/>
<dbReference type="TreeFam" id="TF300911"/>
<dbReference type="Reactome" id="R-MMU-70268">
    <property type="pathway name" value="Pyruvate metabolism"/>
</dbReference>
<dbReference type="BioGRID-ORCS" id="68636">
    <property type="hits" value="1 hit in 61 CRISPR screens"/>
</dbReference>
<dbReference type="PRO" id="PR:Q8R0F8"/>
<dbReference type="Proteomes" id="UP000000589">
    <property type="component" value="Chromosome 17"/>
</dbReference>
<dbReference type="RNAct" id="Q8R0F8">
    <property type="molecule type" value="protein"/>
</dbReference>
<dbReference type="Bgee" id="ENSMUSG00000045316">
    <property type="expression patterns" value="Expressed in ileal epithelium and 236 other cell types or tissues"/>
</dbReference>
<dbReference type="GO" id="GO:0005829">
    <property type="term" value="C:cytosol"/>
    <property type="evidence" value="ECO:0000250"/>
    <property type="project" value="UniProtKB"/>
</dbReference>
<dbReference type="GO" id="GO:0005743">
    <property type="term" value="C:mitochondrial inner membrane"/>
    <property type="evidence" value="ECO:0007005"/>
    <property type="project" value="MGI"/>
</dbReference>
<dbReference type="GO" id="GO:0005759">
    <property type="term" value="C:mitochondrial matrix"/>
    <property type="evidence" value="ECO:0000266"/>
    <property type="project" value="MGI"/>
</dbReference>
<dbReference type="GO" id="GO:0005739">
    <property type="term" value="C:mitochondrion"/>
    <property type="evidence" value="ECO:0007005"/>
    <property type="project" value="MGI"/>
</dbReference>
<dbReference type="GO" id="GO:0005654">
    <property type="term" value="C:nucleoplasm"/>
    <property type="evidence" value="ECO:0007669"/>
    <property type="project" value="Ensembl"/>
</dbReference>
<dbReference type="GO" id="GO:0018773">
    <property type="term" value="F:acetylpyruvate hydrolase activity"/>
    <property type="evidence" value="ECO:0000250"/>
    <property type="project" value="UniProtKB"/>
</dbReference>
<dbReference type="GO" id="GO:0047621">
    <property type="term" value="F:acylpyruvate hydrolase activity"/>
    <property type="evidence" value="ECO:0007669"/>
    <property type="project" value="UniProtKB-EC"/>
</dbReference>
<dbReference type="GO" id="GO:0034545">
    <property type="term" value="F:fumarylpyruvate hydrolase activity"/>
    <property type="evidence" value="ECO:0000250"/>
    <property type="project" value="UniProtKB"/>
</dbReference>
<dbReference type="GO" id="GO:0046872">
    <property type="term" value="F:metal ion binding"/>
    <property type="evidence" value="ECO:0007669"/>
    <property type="project" value="UniProtKB-KW"/>
</dbReference>
<dbReference type="GO" id="GO:0008948">
    <property type="term" value="F:oxaloacetate decarboxylase activity"/>
    <property type="evidence" value="ECO:0000315"/>
    <property type="project" value="MGI"/>
</dbReference>
<dbReference type="GO" id="GO:0050163">
    <property type="term" value="F:oxaloacetate tautomerase activity"/>
    <property type="evidence" value="ECO:0000250"/>
    <property type="project" value="UniProtKB"/>
</dbReference>
<dbReference type="GO" id="GO:0006107">
    <property type="term" value="P:oxaloacetate metabolic process"/>
    <property type="evidence" value="ECO:0000250"/>
    <property type="project" value="UniProtKB"/>
</dbReference>
<dbReference type="GO" id="GO:0006090">
    <property type="term" value="P:pyruvate metabolic process"/>
    <property type="evidence" value="ECO:0000315"/>
    <property type="project" value="MGI"/>
</dbReference>
<dbReference type="FunFam" id="3.90.850.10:FF:000003">
    <property type="entry name" value="Fumarylacetoacetate hydrolase domain-containing 1"/>
    <property type="match status" value="1"/>
</dbReference>
<dbReference type="Gene3D" id="3.90.850.10">
    <property type="entry name" value="Fumarylacetoacetase-like, C-terminal domain"/>
    <property type="match status" value="1"/>
</dbReference>
<dbReference type="InterPro" id="IPR011234">
    <property type="entry name" value="Fumarylacetoacetase-like_C"/>
</dbReference>
<dbReference type="InterPro" id="IPR036663">
    <property type="entry name" value="Fumarylacetoacetase_C_sf"/>
</dbReference>
<dbReference type="NCBIfam" id="NF007967">
    <property type="entry name" value="PRK10691.1"/>
    <property type="match status" value="1"/>
</dbReference>
<dbReference type="PANTHER" id="PTHR11820">
    <property type="entry name" value="ACYLPYRUVASE"/>
    <property type="match status" value="1"/>
</dbReference>
<dbReference type="PANTHER" id="PTHR11820:SF7">
    <property type="entry name" value="ACYLPYRUVASE FAHD1, MITOCHONDRIAL"/>
    <property type="match status" value="1"/>
</dbReference>
<dbReference type="Pfam" id="PF01557">
    <property type="entry name" value="FAA_hydrolase"/>
    <property type="match status" value="1"/>
</dbReference>
<dbReference type="SUPFAM" id="SSF56529">
    <property type="entry name" value="FAH"/>
    <property type="match status" value="1"/>
</dbReference>
<evidence type="ECO:0000250" key="1">
    <source>
        <dbReference type="UniProtKB" id="Q6AYQ8"/>
    </source>
</evidence>
<evidence type="ECO:0000250" key="2">
    <source>
        <dbReference type="UniProtKB" id="Q6P587"/>
    </source>
</evidence>
<evidence type="ECO:0000255" key="3"/>
<evidence type="ECO:0000269" key="4">
    <source>
    </source>
</evidence>
<evidence type="ECO:0000269" key="5">
    <source>
    </source>
</evidence>
<evidence type="ECO:0000269" key="6">
    <source>
    </source>
</evidence>
<evidence type="ECO:0000303" key="7">
    <source>
    </source>
</evidence>
<evidence type="ECO:0000303" key="8">
    <source>
    </source>
</evidence>
<evidence type="ECO:0000305" key="9"/>
<evidence type="ECO:0000305" key="10">
    <source>
    </source>
</evidence>
<evidence type="ECO:0000305" key="11">
    <source>
    </source>
</evidence>
<evidence type="ECO:0000312" key="12">
    <source>
        <dbReference type="MGI" id="MGI:1915886"/>
    </source>
</evidence>
<evidence type="ECO:0007744" key="13">
    <source>
        <dbReference type="PDB" id="6SBI"/>
    </source>
</evidence>
<evidence type="ECO:0007744" key="14">
    <source>
        <dbReference type="PDB" id="6SBJ"/>
    </source>
</evidence>
<evidence type="ECO:0007744" key="15">
    <source>
    </source>
</evidence>
<evidence type="ECO:0007744" key="16">
    <source>
    </source>
</evidence>
<evidence type="ECO:0007829" key="17">
    <source>
        <dbReference type="PDB" id="6SBJ"/>
    </source>
</evidence>
<name>FAHD1_MOUSE</name>